<proteinExistence type="inferred from homology"/>
<keyword id="KW-0997">Cell inner membrane</keyword>
<keyword id="KW-1003">Cell membrane</keyword>
<keyword id="KW-0201">Cytochrome c-type biogenesis</keyword>
<keyword id="KW-0349">Heme</keyword>
<keyword id="KW-0408">Iron</keyword>
<keyword id="KW-0472">Membrane</keyword>
<keyword id="KW-0479">Metal-binding</keyword>
<keyword id="KW-0735">Signal-anchor</keyword>
<keyword id="KW-0812">Transmembrane</keyword>
<keyword id="KW-1133">Transmembrane helix</keyword>
<feature type="chain" id="PRO_0000238829" description="Cytochrome c-type biogenesis protein CcmE">
    <location>
        <begin position="1"/>
        <end position="158"/>
    </location>
</feature>
<feature type="topological domain" description="Cytoplasmic" evidence="1">
    <location>
        <begin position="1"/>
        <end position="8"/>
    </location>
</feature>
<feature type="transmembrane region" description="Helical; Signal-anchor for type II membrane protein" evidence="1">
    <location>
        <begin position="9"/>
        <end position="29"/>
    </location>
</feature>
<feature type="topological domain" description="Periplasmic" evidence="1">
    <location>
        <begin position="30"/>
        <end position="158"/>
    </location>
</feature>
<feature type="binding site" description="covalent" evidence="1">
    <location>
        <position position="130"/>
    </location>
    <ligand>
        <name>heme</name>
        <dbReference type="ChEBI" id="CHEBI:30413"/>
    </ligand>
</feature>
<feature type="binding site" description="axial binding residue" evidence="1">
    <location>
        <position position="134"/>
    </location>
    <ligand>
        <name>heme</name>
        <dbReference type="ChEBI" id="CHEBI:30413"/>
    </ligand>
    <ligandPart>
        <name>Fe</name>
        <dbReference type="ChEBI" id="CHEBI:18248"/>
    </ligandPart>
</feature>
<comment type="function">
    <text evidence="1">Heme chaperone required for the biogenesis of c-type cytochromes. Transiently binds heme delivered by CcmC and transfers the heme to apo-cytochromes in a process facilitated by CcmF and CcmH.</text>
</comment>
<comment type="subcellular location">
    <subcellularLocation>
        <location evidence="1">Cell inner membrane</location>
        <topology evidence="1">Single-pass type II membrane protein</topology>
        <orientation evidence="1">Periplasmic side</orientation>
    </subcellularLocation>
</comment>
<comment type="similarity">
    <text evidence="1">Belongs to the CcmE/CycJ family.</text>
</comment>
<dbReference type="EMBL" id="AF103874">
    <property type="protein sequence ID" value="AAD19541.1"/>
    <property type="molecule type" value="Genomic_DNA"/>
</dbReference>
<dbReference type="SMR" id="Q9Z647"/>
<dbReference type="GO" id="GO:0005886">
    <property type="term" value="C:plasma membrane"/>
    <property type="evidence" value="ECO:0007669"/>
    <property type="project" value="UniProtKB-SubCell"/>
</dbReference>
<dbReference type="GO" id="GO:0020037">
    <property type="term" value="F:heme binding"/>
    <property type="evidence" value="ECO:0007669"/>
    <property type="project" value="InterPro"/>
</dbReference>
<dbReference type="GO" id="GO:0046872">
    <property type="term" value="F:metal ion binding"/>
    <property type="evidence" value="ECO:0007669"/>
    <property type="project" value="UniProtKB-KW"/>
</dbReference>
<dbReference type="GO" id="GO:0017004">
    <property type="term" value="P:cytochrome complex assembly"/>
    <property type="evidence" value="ECO:0007669"/>
    <property type="project" value="UniProtKB-KW"/>
</dbReference>
<dbReference type="FunFam" id="2.40.50.140:FF:000104">
    <property type="entry name" value="Cytochrome c-type biogenesis protein CcmE"/>
    <property type="match status" value="1"/>
</dbReference>
<dbReference type="Gene3D" id="2.40.50.140">
    <property type="entry name" value="Nucleic acid-binding proteins"/>
    <property type="match status" value="1"/>
</dbReference>
<dbReference type="HAMAP" id="MF_01959">
    <property type="entry name" value="CcmE"/>
    <property type="match status" value="1"/>
</dbReference>
<dbReference type="InterPro" id="IPR004329">
    <property type="entry name" value="CcmE"/>
</dbReference>
<dbReference type="InterPro" id="IPR036127">
    <property type="entry name" value="CcmE-like_sf"/>
</dbReference>
<dbReference type="InterPro" id="IPR012340">
    <property type="entry name" value="NA-bd_OB-fold"/>
</dbReference>
<dbReference type="NCBIfam" id="NF009638">
    <property type="entry name" value="PRK13165.1"/>
    <property type="match status" value="1"/>
</dbReference>
<dbReference type="NCBIfam" id="NF009727">
    <property type="entry name" value="PRK13254.1-1"/>
    <property type="match status" value="1"/>
</dbReference>
<dbReference type="NCBIfam" id="NF009729">
    <property type="entry name" value="PRK13254.1-3"/>
    <property type="match status" value="1"/>
</dbReference>
<dbReference type="PANTHER" id="PTHR34128">
    <property type="entry name" value="CYTOCHROME C-TYPE BIOGENESIS PROTEIN CCME HOMOLOG, MITOCHONDRIAL"/>
    <property type="match status" value="1"/>
</dbReference>
<dbReference type="PANTHER" id="PTHR34128:SF2">
    <property type="entry name" value="CYTOCHROME C-TYPE BIOGENESIS PROTEIN CCME HOMOLOG, MITOCHONDRIAL"/>
    <property type="match status" value="1"/>
</dbReference>
<dbReference type="Pfam" id="PF03100">
    <property type="entry name" value="CcmE"/>
    <property type="match status" value="1"/>
</dbReference>
<dbReference type="SUPFAM" id="SSF82093">
    <property type="entry name" value="Heme chaperone CcmE"/>
    <property type="match status" value="1"/>
</dbReference>
<organism>
    <name type="scientific">Tatumella citrea</name>
    <name type="common">Pantoea citrea</name>
    <dbReference type="NCBI Taxonomy" id="53336"/>
    <lineage>
        <taxon>Bacteria</taxon>
        <taxon>Pseudomonadati</taxon>
        <taxon>Pseudomonadota</taxon>
        <taxon>Gammaproteobacteria</taxon>
        <taxon>Enterobacterales</taxon>
        <taxon>Erwiniaceae</taxon>
        <taxon>Tatumella</taxon>
    </lineage>
</organism>
<accession>Q9Z647</accession>
<protein>
    <recommendedName>
        <fullName evidence="1">Cytochrome c-type biogenesis protein CcmE</fullName>
    </recommendedName>
    <alternativeName>
        <fullName evidence="1">Cytochrome c maturation protein E</fullName>
    </alternativeName>
    <alternativeName>
        <fullName evidence="1">Heme chaperone CcmE</fullName>
    </alternativeName>
</protein>
<gene>
    <name evidence="1" type="primary">ccmE</name>
    <name evidence="1" type="synonym">cycJ</name>
</gene>
<reference key="1">
    <citation type="journal article" date="2000" name="J. Bacteriol.">
        <title>Genetic and biochemical characterization of the pathway in Pantoea citrea leading to pink disease of pineapple.</title>
        <authorList>
            <person name="Pujol C.J."/>
            <person name="Kado C.I."/>
        </authorList>
    </citation>
    <scope>NUCLEOTIDE SEQUENCE [GENOMIC DNA]</scope>
    <source>
        <strain>1056R</strain>
    </source>
</reference>
<sequence length="158" mass="17383">MNIRRRRRLLVVVAILVGLGLATGLVMYALRSNIDLFYTPSEILNGRGPEHKDIPHPGQRLRIGGMVMPGSVKRDPKSLAVEFKLYDANGVVSVSYVGILPDLFREGQGIVAEGVLEDGNLSGDQVLAKHDEKYTPPEIEDAMKQNHKGLLNVSEPTR</sequence>
<evidence type="ECO:0000255" key="1">
    <source>
        <dbReference type="HAMAP-Rule" id="MF_01959"/>
    </source>
</evidence>
<name>CCME_TATCI</name>